<accession>Q81J19</accession>
<sequence>MARKTNTRKKRVKKNIEAGIAHIRSTFNNTIVTLTDTHGNALSWSSAGALGFRGSRKSTPFAAQMAAETAAKAAMEHGLKTLEVTVKGPGAGREAAIRALQAAGLEVTAIRDVTPVPHNGCRPPKRRRV</sequence>
<feature type="chain" id="PRO_0000123098" description="Small ribosomal subunit protein uS11">
    <location>
        <begin position="1"/>
        <end position="129"/>
    </location>
</feature>
<reference key="1">
    <citation type="journal article" date="2003" name="Nature">
        <title>Genome sequence of Bacillus cereus and comparative analysis with Bacillus anthracis.</title>
        <authorList>
            <person name="Ivanova N."/>
            <person name="Sorokin A."/>
            <person name="Anderson I."/>
            <person name="Galleron N."/>
            <person name="Candelon B."/>
            <person name="Kapatral V."/>
            <person name="Bhattacharyya A."/>
            <person name="Reznik G."/>
            <person name="Mikhailova N."/>
            <person name="Lapidus A."/>
            <person name="Chu L."/>
            <person name="Mazur M."/>
            <person name="Goltsman E."/>
            <person name="Larsen N."/>
            <person name="D'Souza M."/>
            <person name="Walunas T."/>
            <person name="Grechkin Y."/>
            <person name="Pusch G."/>
            <person name="Haselkorn R."/>
            <person name="Fonstein M."/>
            <person name="Ehrlich S.D."/>
            <person name="Overbeek R."/>
            <person name="Kyrpides N.C."/>
        </authorList>
    </citation>
    <scope>NUCLEOTIDE SEQUENCE [LARGE SCALE GENOMIC DNA]</scope>
    <source>
        <strain>ATCC 14579 / DSM 31 / CCUG 7414 / JCM 2152 / NBRC 15305 / NCIMB 9373 / NCTC 2599 / NRRL B-3711</strain>
    </source>
</reference>
<keyword id="KW-1185">Reference proteome</keyword>
<keyword id="KW-0687">Ribonucleoprotein</keyword>
<keyword id="KW-0689">Ribosomal protein</keyword>
<keyword id="KW-0694">RNA-binding</keyword>
<keyword id="KW-0699">rRNA-binding</keyword>
<name>RS11_BACCR</name>
<gene>
    <name evidence="1" type="primary">rpsK</name>
    <name type="ordered locus">BC_0157</name>
</gene>
<comment type="function">
    <text evidence="1">Located on the platform of the 30S subunit, it bridges several disparate RNA helices of the 16S rRNA. Forms part of the Shine-Dalgarno cleft in the 70S ribosome.</text>
</comment>
<comment type="subunit">
    <text evidence="1">Part of the 30S ribosomal subunit. Interacts with proteins S7 and S18. Binds to IF-3.</text>
</comment>
<comment type="similarity">
    <text evidence="1">Belongs to the universal ribosomal protein uS11 family.</text>
</comment>
<evidence type="ECO:0000255" key="1">
    <source>
        <dbReference type="HAMAP-Rule" id="MF_01310"/>
    </source>
</evidence>
<evidence type="ECO:0000305" key="2"/>
<protein>
    <recommendedName>
        <fullName evidence="1">Small ribosomal subunit protein uS11</fullName>
    </recommendedName>
    <alternativeName>
        <fullName evidence="2">30S ribosomal protein S11</fullName>
    </alternativeName>
</protein>
<organism>
    <name type="scientific">Bacillus cereus (strain ATCC 14579 / DSM 31 / CCUG 7414 / JCM 2152 / NBRC 15305 / NCIMB 9373 / NCTC 2599 / NRRL B-3711)</name>
    <dbReference type="NCBI Taxonomy" id="226900"/>
    <lineage>
        <taxon>Bacteria</taxon>
        <taxon>Bacillati</taxon>
        <taxon>Bacillota</taxon>
        <taxon>Bacilli</taxon>
        <taxon>Bacillales</taxon>
        <taxon>Bacillaceae</taxon>
        <taxon>Bacillus</taxon>
        <taxon>Bacillus cereus group</taxon>
    </lineage>
</organism>
<dbReference type="EMBL" id="AE016877">
    <property type="protein sequence ID" value="AAP07237.1"/>
    <property type="molecule type" value="Genomic_DNA"/>
</dbReference>
<dbReference type="RefSeq" id="NP_830036.1">
    <property type="nucleotide sequence ID" value="NC_004722.1"/>
</dbReference>
<dbReference type="RefSeq" id="WP_000101798.1">
    <property type="nucleotide sequence ID" value="NZ_CP138336.1"/>
</dbReference>
<dbReference type="SMR" id="Q81J19"/>
<dbReference type="STRING" id="226900.BC_0157"/>
<dbReference type="MetOSite" id="Q81J19"/>
<dbReference type="GeneID" id="83633757"/>
<dbReference type="KEGG" id="bce:BC0157"/>
<dbReference type="PATRIC" id="fig|226900.8.peg.159"/>
<dbReference type="HOGENOM" id="CLU_072439_5_0_9"/>
<dbReference type="OrthoDB" id="9806415at2"/>
<dbReference type="Proteomes" id="UP000001417">
    <property type="component" value="Chromosome"/>
</dbReference>
<dbReference type="GO" id="GO:0022627">
    <property type="term" value="C:cytosolic small ribosomal subunit"/>
    <property type="evidence" value="ECO:0000318"/>
    <property type="project" value="GO_Central"/>
</dbReference>
<dbReference type="GO" id="GO:0019843">
    <property type="term" value="F:rRNA binding"/>
    <property type="evidence" value="ECO:0007669"/>
    <property type="project" value="UniProtKB-UniRule"/>
</dbReference>
<dbReference type="GO" id="GO:0003735">
    <property type="term" value="F:structural constituent of ribosome"/>
    <property type="evidence" value="ECO:0000318"/>
    <property type="project" value="GO_Central"/>
</dbReference>
<dbReference type="GO" id="GO:0006412">
    <property type="term" value="P:translation"/>
    <property type="evidence" value="ECO:0000318"/>
    <property type="project" value="GO_Central"/>
</dbReference>
<dbReference type="FunFam" id="3.30.420.80:FF:000001">
    <property type="entry name" value="30S ribosomal protein S11"/>
    <property type="match status" value="1"/>
</dbReference>
<dbReference type="Gene3D" id="3.30.420.80">
    <property type="entry name" value="Ribosomal protein S11"/>
    <property type="match status" value="1"/>
</dbReference>
<dbReference type="HAMAP" id="MF_01310">
    <property type="entry name" value="Ribosomal_uS11"/>
    <property type="match status" value="1"/>
</dbReference>
<dbReference type="InterPro" id="IPR001971">
    <property type="entry name" value="Ribosomal_uS11"/>
</dbReference>
<dbReference type="InterPro" id="IPR019981">
    <property type="entry name" value="Ribosomal_uS11_bac-type"/>
</dbReference>
<dbReference type="InterPro" id="IPR018102">
    <property type="entry name" value="Ribosomal_uS11_CS"/>
</dbReference>
<dbReference type="InterPro" id="IPR036967">
    <property type="entry name" value="Ribosomal_uS11_sf"/>
</dbReference>
<dbReference type="NCBIfam" id="NF003698">
    <property type="entry name" value="PRK05309.1"/>
    <property type="match status" value="1"/>
</dbReference>
<dbReference type="NCBIfam" id="TIGR03632">
    <property type="entry name" value="uS11_bact"/>
    <property type="match status" value="1"/>
</dbReference>
<dbReference type="PANTHER" id="PTHR11759">
    <property type="entry name" value="40S RIBOSOMAL PROTEIN S14/30S RIBOSOMAL PROTEIN S11"/>
    <property type="match status" value="1"/>
</dbReference>
<dbReference type="Pfam" id="PF00411">
    <property type="entry name" value="Ribosomal_S11"/>
    <property type="match status" value="1"/>
</dbReference>
<dbReference type="PIRSF" id="PIRSF002131">
    <property type="entry name" value="Ribosomal_S11"/>
    <property type="match status" value="1"/>
</dbReference>
<dbReference type="SUPFAM" id="SSF53137">
    <property type="entry name" value="Translational machinery components"/>
    <property type="match status" value="1"/>
</dbReference>
<dbReference type="PROSITE" id="PS00054">
    <property type="entry name" value="RIBOSOMAL_S11"/>
    <property type="match status" value="1"/>
</dbReference>
<proteinExistence type="inferred from homology"/>